<reference evidence="5" key="1">
    <citation type="journal article" date="2010" name="J. Agric. Food Chem.">
        <title>Primary structure of potential allergenic proteins in emu (Dromaius novaehollandiae) egg white.</title>
        <authorList>
            <person name="Maehashi K."/>
            <person name="Matano M."/>
            <person name="Irisawa T."/>
            <person name="Uchino M."/>
            <person name="Itagaki Y."/>
            <person name="Takano K."/>
            <person name="Kashiwagi Y."/>
            <person name="Watanabe T."/>
        </authorList>
    </citation>
    <scope>NUCLEOTIDE SEQUENCE [MRNA]</scope>
    <scope>PROTEIN SEQUENCE OF 173-192</scope>
    <scope>BLOCKAGE OF N-TERMINUS</scope>
    <source>
        <tissue evidence="3">Egg white</tissue>
        <tissue evidence="6">Oviduct</tissue>
    </source>
</reference>
<name>OVAL_DRONO</name>
<protein>
    <recommendedName>
        <fullName evidence="4">Ovalbumin</fullName>
        <shortName evidence="4">OVA</shortName>
    </recommendedName>
    <alternativeName>
        <fullName evidence="1">Egg albumin</fullName>
    </alternativeName>
</protein>
<keyword id="KW-0002">3D-structure</keyword>
<keyword id="KW-0007">Acetylation</keyword>
<keyword id="KW-0903">Direct protein sequencing</keyword>
<keyword id="KW-1015">Disulfide bond</keyword>
<keyword id="KW-0325">Glycoprotein</keyword>
<keyword id="KW-0597">Phosphoprotein</keyword>
<keyword id="KW-0964">Secreted</keyword>
<gene>
    <name type="primary">SERPINB14</name>
</gene>
<organism>
    <name type="scientific">Dromaius novaehollandiae</name>
    <name type="common">Emu</name>
    <dbReference type="NCBI Taxonomy" id="8790"/>
    <lineage>
        <taxon>Eukaryota</taxon>
        <taxon>Metazoa</taxon>
        <taxon>Chordata</taxon>
        <taxon>Craniata</taxon>
        <taxon>Vertebrata</taxon>
        <taxon>Euteleostomi</taxon>
        <taxon>Archelosauria</taxon>
        <taxon>Archosauria</taxon>
        <taxon>Dinosauria</taxon>
        <taxon>Saurischia</taxon>
        <taxon>Theropoda</taxon>
        <taxon>Coelurosauria</taxon>
        <taxon>Aves</taxon>
        <taxon>Palaeognathae</taxon>
        <taxon>Casuariiformes</taxon>
        <taxon>Dromaiidae</taxon>
        <taxon>Dromaius</taxon>
    </lineage>
</organism>
<dbReference type="EMBL" id="AB525084">
    <property type="protein sequence ID" value="BAJ23166.1"/>
    <property type="molecule type" value="mRNA"/>
</dbReference>
<dbReference type="PDB" id="6KGA">
    <property type="method" value="X-ray"/>
    <property type="resolution" value="3.30 A"/>
    <property type="chains" value="A/B/C=1-386"/>
</dbReference>
<dbReference type="PDBsum" id="6KGA"/>
<dbReference type="SMR" id="E2RVI8"/>
<dbReference type="GlyCosmos" id="E2RVI8">
    <property type="glycosylation" value="1 site, No reported glycans"/>
</dbReference>
<dbReference type="Ensembl" id="ENSDNVT00000018679.1">
    <property type="protein sequence ID" value="ENSDNVP00000015532.1"/>
    <property type="gene ID" value="ENSDNVG00000010949.1"/>
</dbReference>
<dbReference type="OrthoDB" id="671595at2759"/>
<dbReference type="Proteomes" id="UP000694423">
    <property type="component" value="Unplaced"/>
</dbReference>
<dbReference type="GO" id="GO:0005615">
    <property type="term" value="C:extracellular space"/>
    <property type="evidence" value="ECO:0007669"/>
    <property type="project" value="InterPro"/>
</dbReference>
<dbReference type="GO" id="GO:0004867">
    <property type="term" value="F:serine-type endopeptidase inhibitor activity"/>
    <property type="evidence" value="ECO:0007669"/>
    <property type="project" value="InterPro"/>
</dbReference>
<dbReference type="CDD" id="cd02059">
    <property type="entry name" value="serpinB14_OVA"/>
    <property type="match status" value="1"/>
</dbReference>
<dbReference type="FunFam" id="2.30.39.10:FF:000001">
    <property type="entry name" value="Serpin family B member 2"/>
    <property type="match status" value="1"/>
</dbReference>
<dbReference type="Gene3D" id="2.30.39.10">
    <property type="entry name" value="Alpha-1-antitrypsin, domain 1"/>
    <property type="match status" value="1"/>
</dbReference>
<dbReference type="Gene3D" id="3.30.497.10">
    <property type="entry name" value="Antithrombin, subunit I, domain 2"/>
    <property type="match status" value="1"/>
</dbReference>
<dbReference type="InterPro" id="IPR023795">
    <property type="entry name" value="Serpin_CS"/>
</dbReference>
<dbReference type="InterPro" id="IPR023796">
    <property type="entry name" value="Serpin_dom"/>
</dbReference>
<dbReference type="InterPro" id="IPR000215">
    <property type="entry name" value="Serpin_fam"/>
</dbReference>
<dbReference type="InterPro" id="IPR036186">
    <property type="entry name" value="Serpin_sf"/>
</dbReference>
<dbReference type="InterPro" id="IPR042178">
    <property type="entry name" value="Serpin_sf_1"/>
</dbReference>
<dbReference type="InterPro" id="IPR042185">
    <property type="entry name" value="Serpin_sf_2"/>
</dbReference>
<dbReference type="PANTHER" id="PTHR11461">
    <property type="entry name" value="SERINE PROTEASE INHIBITOR, SERPIN"/>
    <property type="match status" value="1"/>
</dbReference>
<dbReference type="PANTHER" id="PTHR11461:SF186">
    <property type="entry name" value="SERPIN B4"/>
    <property type="match status" value="1"/>
</dbReference>
<dbReference type="Pfam" id="PF00079">
    <property type="entry name" value="Serpin"/>
    <property type="match status" value="1"/>
</dbReference>
<dbReference type="SMART" id="SM00093">
    <property type="entry name" value="SERPIN"/>
    <property type="match status" value="1"/>
</dbReference>
<dbReference type="SUPFAM" id="SSF56574">
    <property type="entry name" value="Serpins"/>
    <property type="match status" value="1"/>
</dbReference>
<dbReference type="PROSITE" id="PS00284">
    <property type="entry name" value="SERPIN"/>
    <property type="match status" value="1"/>
</dbReference>
<feature type="initiator methionine" description="Removed" evidence="1">
    <location>
        <position position="1"/>
    </location>
</feature>
<feature type="chain" id="PRO_0000411101" description="Ovalbumin">
    <location>
        <begin position="2"/>
        <end position="386"/>
    </location>
</feature>
<feature type="site" description="Reactive bond homolog" evidence="1">
    <location>
        <begin position="353"/>
        <end position="354"/>
    </location>
</feature>
<feature type="modified residue" description="N-acetylglycine" evidence="1">
    <location>
        <position position="2"/>
    </location>
</feature>
<feature type="modified residue" description="Phosphoserine" evidence="1">
    <location>
        <position position="69"/>
    </location>
</feature>
<feature type="modified residue" description="Phosphoserine" evidence="1">
    <location>
        <position position="345"/>
    </location>
</feature>
<feature type="glycosylation site" description="N-linked (GlcNAc...) asparagine" evidence="2">
    <location>
        <position position="293"/>
    </location>
</feature>
<feature type="disulfide bond" evidence="1">
    <location>
        <begin position="74"/>
        <end position="121"/>
    </location>
</feature>
<feature type="helix" evidence="7">
    <location>
        <begin position="4"/>
        <end position="20"/>
    </location>
</feature>
<feature type="strand" evidence="7">
    <location>
        <begin position="28"/>
        <end position="30"/>
    </location>
</feature>
<feature type="helix" evidence="7">
    <location>
        <begin position="32"/>
        <end position="45"/>
    </location>
</feature>
<feature type="helix" evidence="7">
    <location>
        <begin position="48"/>
        <end position="58"/>
    </location>
</feature>
<feature type="turn" evidence="7">
    <location>
        <begin position="59"/>
        <end position="63"/>
    </location>
</feature>
<feature type="strand" evidence="7">
    <location>
        <begin position="70"/>
        <end position="76"/>
    </location>
</feature>
<feature type="helix" evidence="7">
    <location>
        <begin position="78"/>
        <end position="91"/>
    </location>
</feature>
<feature type="strand" evidence="7">
    <location>
        <begin position="99"/>
        <end position="112"/>
    </location>
</feature>
<feature type="helix" evidence="7">
    <location>
        <begin position="116"/>
        <end position="126"/>
    </location>
</feature>
<feature type="strand" evidence="7">
    <location>
        <begin position="128"/>
        <end position="133"/>
    </location>
</feature>
<feature type="turn" evidence="7">
    <location>
        <begin position="135"/>
        <end position="137"/>
    </location>
</feature>
<feature type="helix" evidence="7">
    <location>
        <begin position="139"/>
        <end position="153"/>
    </location>
</feature>
<feature type="turn" evidence="7">
    <location>
        <begin position="154"/>
        <end position="156"/>
    </location>
</feature>
<feature type="strand" evidence="7">
    <location>
        <begin position="173"/>
        <end position="187"/>
    </location>
</feature>
<feature type="strand" evidence="7">
    <location>
        <begin position="195"/>
        <end position="199"/>
    </location>
</feature>
<feature type="strand" evidence="7">
    <location>
        <begin position="201"/>
        <end position="204"/>
    </location>
</feature>
<feature type="strand" evidence="7">
    <location>
        <begin position="207"/>
        <end position="223"/>
    </location>
</feature>
<feature type="turn" evidence="7">
    <location>
        <begin position="224"/>
        <end position="227"/>
    </location>
</feature>
<feature type="strand" evidence="7">
    <location>
        <begin position="228"/>
        <end position="235"/>
    </location>
</feature>
<feature type="helix" evidence="7">
    <location>
        <begin position="236"/>
        <end position="238"/>
    </location>
</feature>
<feature type="strand" evidence="7">
    <location>
        <begin position="239"/>
        <end position="249"/>
    </location>
</feature>
<feature type="helix" evidence="7">
    <location>
        <begin position="252"/>
        <end position="259"/>
    </location>
</feature>
<feature type="helix" evidence="7">
    <location>
        <begin position="262"/>
        <end position="268"/>
    </location>
</feature>
<feature type="turn" evidence="7">
    <location>
        <begin position="271"/>
        <end position="273"/>
    </location>
</feature>
<feature type="strand" evidence="7">
    <location>
        <begin position="274"/>
        <end position="284"/>
    </location>
</feature>
<feature type="strand" evidence="7">
    <location>
        <begin position="286"/>
        <end position="293"/>
    </location>
</feature>
<feature type="helix" evidence="7">
    <location>
        <begin position="295"/>
        <end position="301"/>
    </location>
</feature>
<feature type="helix" evidence="7">
    <location>
        <begin position="304"/>
        <end position="307"/>
    </location>
</feature>
<feature type="turn" evidence="7">
    <location>
        <begin position="314"/>
        <end position="316"/>
    </location>
</feature>
<feature type="strand" evidence="7">
    <location>
        <begin position="318"/>
        <end position="320"/>
    </location>
</feature>
<feature type="strand" evidence="7">
    <location>
        <begin position="323"/>
        <end position="335"/>
    </location>
</feature>
<feature type="strand" evidence="7">
    <location>
        <begin position="337"/>
        <end position="351"/>
    </location>
</feature>
<feature type="strand" evidence="7">
    <location>
        <begin position="358"/>
        <end position="360"/>
    </location>
</feature>
<feature type="strand" evidence="7">
    <location>
        <begin position="365"/>
        <end position="371"/>
    </location>
</feature>
<feature type="turn" evidence="7">
    <location>
        <begin position="372"/>
        <end position="375"/>
    </location>
</feature>
<feature type="strand" evidence="7">
    <location>
        <begin position="376"/>
        <end position="384"/>
    </location>
</feature>
<comment type="function">
    <text evidence="1">Storage protein of egg white. Lacks protease inhibitory activity (By similarity).</text>
</comment>
<comment type="subcellular location">
    <subcellularLocation>
        <location evidence="1">Secreted</location>
    </subcellularLocation>
</comment>
<comment type="PTM">
    <text evidence="3">The N-terminus is blocked.</text>
</comment>
<comment type="miscellaneous">
    <text evidence="3">Much lower abundance than corresponding protein in chicken egg white.</text>
</comment>
<comment type="similarity">
    <text evidence="2">Belongs to the serpin family. Ov-serpin subfamily.</text>
</comment>
<evidence type="ECO:0000250" key="1">
    <source>
        <dbReference type="UniProtKB" id="P01012"/>
    </source>
</evidence>
<evidence type="ECO:0000255" key="2"/>
<evidence type="ECO:0000269" key="3">
    <source>
    </source>
</evidence>
<evidence type="ECO:0000303" key="4">
    <source>
    </source>
</evidence>
<evidence type="ECO:0000305" key="5"/>
<evidence type="ECO:0000312" key="6">
    <source>
        <dbReference type="EMBL" id="BAJ23166.1"/>
    </source>
</evidence>
<evidence type="ECO:0007829" key="7">
    <source>
        <dbReference type="PDB" id="6KGA"/>
    </source>
</evidence>
<accession>E2RVI8</accession>
<accession>P86380</accession>
<sequence length="386" mass="43081">MGSIGAASTEFCFDMFKELKVHHVNENIIYSPLSIISILSMVFLGARENTKTQMEKVIHFDKITGFGESLESQCGTSVSVHASLKDILSEITKPSDNYSLSLASKLYAEETYPVLPEYLQCIKELYKGSLETVSFQTAADQARELINSWVETQTNGVIKNFLQPGSVDPQTEMVLVDAIYFKGTWEKAFKDEDTQEVPFRITEQESKPVQMMYQAGSFKVATVAAEKMKILELPYASGELSMFVLLPDDISGLEQLETTISIEKLSEWTSSNMMEDRKMKVYLPHMKIEEKYNLTSVLVALGMTDLFSPSANLSGISTAQTLKMSEAIHGAYVEIYEAGSEMATSTGVLVEAASVSEEFRVDHPFLFLIKHNPSNSILFFGRCIFP</sequence>
<proteinExistence type="evidence at protein level"/>